<feature type="chain" id="PRO_0000065698" description="Vi polysaccharide biosynthesis protein TviA">
    <location>
        <begin position="1"/>
        <end position="179"/>
    </location>
</feature>
<organism>
    <name type="scientific">Salmonella typhi</name>
    <dbReference type="NCBI Taxonomy" id="90370"/>
    <lineage>
        <taxon>Bacteria</taxon>
        <taxon>Pseudomonadati</taxon>
        <taxon>Pseudomonadota</taxon>
        <taxon>Gammaproteobacteria</taxon>
        <taxon>Enterobacterales</taxon>
        <taxon>Enterobacteriaceae</taxon>
        <taxon>Salmonella</taxon>
    </lineage>
</organism>
<proteinExistence type="predicted"/>
<reference key="1">
    <citation type="journal article" date="1993" name="Res. Microbiol.">
        <title>Identification of six open reading frames in the Salmonella enterica subsp. enterica ser. Typhi viaB locus involved in Vi antigen production.</title>
        <authorList>
            <person name="Waxin H."/>
            <person name="Virlogeux I."/>
            <person name="Kolyva S."/>
            <person name="Popoff M.Y."/>
        </authorList>
    </citation>
    <scope>NUCLEOTIDE SEQUENCE [GENOMIC DNA]</scope>
    <source>
        <strain>ATCC 700931 / Ty2</strain>
    </source>
</reference>
<reference key="2">
    <citation type="journal article" date="1993" name="J. Bacteriol.">
        <title>Complete nucleotide sequence and molecular characterization of ViaB region encoding Vi antigen in Salmonella typhi.</title>
        <authorList>
            <person name="Hashimoto Y."/>
            <person name="Li N."/>
            <person name="Yokoyama H."/>
            <person name="Ezaki T."/>
        </authorList>
    </citation>
    <scope>NUCLEOTIDE SEQUENCE [GENOMIC DNA]</scope>
    <source>
        <strain>GIFU 10007</strain>
    </source>
</reference>
<reference key="3">
    <citation type="journal article" date="2001" name="Nature">
        <title>Complete genome sequence of a multiple drug resistant Salmonella enterica serovar Typhi CT18.</title>
        <authorList>
            <person name="Parkhill J."/>
            <person name="Dougan G."/>
            <person name="James K.D."/>
            <person name="Thomson N.R."/>
            <person name="Pickard D."/>
            <person name="Wain J."/>
            <person name="Churcher C.M."/>
            <person name="Mungall K.L."/>
            <person name="Bentley S.D."/>
            <person name="Holden M.T.G."/>
            <person name="Sebaihia M."/>
            <person name="Baker S."/>
            <person name="Basham D."/>
            <person name="Brooks K."/>
            <person name="Chillingworth T."/>
            <person name="Connerton P."/>
            <person name="Cronin A."/>
            <person name="Davis P."/>
            <person name="Davies R.M."/>
            <person name="Dowd L."/>
            <person name="White N."/>
            <person name="Farrar J."/>
            <person name="Feltwell T."/>
            <person name="Hamlin N."/>
            <person name="Haque A."/>
            <person name="Hien T.T."/>
            <person name="Holroyd S."/>
            <person name="Jagels K."/>
            <person name="Krogh A."/>
            <person name="Larsen T.S."/>
            <person name="Leather S."/>
            <person name="Moule S."/>
            <person name="O'Gaora P."/>
            <person name="Parry C."/>
            <person name="Quail M.A."/>
            <person name="Rutherford K.M."/>
            <person name="Simmonds M."/>
            <person name="Skelton J."/>
            <person name="Stevens K."/>
            <person name="Whitehead S."/>
            <person name="Barrell B.G."/>
        </authorList>
    </citation>
    <scope>NUCLEOTIDE SEQUENCE [LARGE SCALE GENOMIC DNA]</scope>
    <source>
        <strain>CT18</strain>
    </source>
</reference>
<reference key="4">
    <citation type="journal article" date="2003" name="J. Bacteriol.">
        <title>Comparative genomics of Salmonella enterica serovar Typhi strains Ty2 and CT18.</title>
        <authorList>
            <person name="Deng W."/>
            <person name="Liou S.-R."/>
            <person name="Plunkett G. III"/>
            <person name="Mayhew G.F."/>
            <person name="Rose D.J."/>
            <person name="Burland V."/>
            <person name="Kodoyianni V."/>
            <person name="Schwartz D.C."/>
            <person name="Blattner F.R."/>
        </authorList>
    </citation>
    <scope>NUCLEOTIDE SEQUENCE [LARGE SCALE GENOMIC DNA]</scope>
    <source>
        <strain>ATCC 700931 / Ty2</strain>
    </source>
</reference>
<sequence length="179" mass="21113">MRFHHFWPPNDIYFGVGAAGIIEEVSLITNDRNYLFVNLNRYSLLNALNFFTRMSDINKIIVIISSSRLMPLARFWLTECKNVIAVFDAATSVQDIIRNVSQHQSGEKILTEQRDYRFRINRKDIVKMKYFLSESGMEELQDRFMNSSSTMYRWRKELAVKFGVREPRYLLLPDSVTLL</sequence>
<comment type="pathway">
    <text>Glycan metabolism; Vi-antigen biosynthesis.</text>
</comment>
<comment type="pathway">
    <text>Capsule biogenesis; capsule polysaccharide biosynthesis.</text>
</comment>
<protein>
    <recommendedName>
        <fullName>Vi polysaccharide biosynthesis protein TviA</fullName>
    </recommendedName>
</protein>
<accession>Q04971</accession>
<name>TVIA_SALTI</name>
<gene>
    <name type="primary">tviA</name>
    <name type="ordered locus">STY4662</name>
    <name type="ordered locus">t4353</name>
</gene>
<dbReference type="EMBL" id="X67785">
    <property type="protein sequence ID" value="CAA47990.1"/>
    <property type="molecule type" value="Genomic_DNA"/>
</dbReference>
<dbReference type="EMBL" id="D14156">
    <property type="protein sequence ID" value="BAA03191.1"/>
    <property type="molecule type" value="Genomic_DNA"/>
</dbReference>
<dbReference type="EMBL" id="AL513382">
    <property type="protein sequence ID" value="CAD06782.1"/>
    <property type="molecule type" value="Genomic_DNA"/>
</dbReference>
<dbReference type="EMBL" id="AE014613">
    <property type="protein sequence ID" value="AAO71806.1"/>
    <property type="molecule type" value="Genomic_DNA"/>
</dbReference>
<dbReference type="PIR" id="A36892">
    <property type="entry name" value="A36892"/>
</dbReference>
<dbReference type="RefSeq" id="NP_458741.1">
    <property type="nucleotide sequence ID" value="NC_003198.1"/>
</dbReference>
<dbReference type="RefSeq" id="WP_001210944.1">
    <property type="nucleotide sequence ID" value="NZ_WSUR01000012.1"/>
</dbReference>
<dbReference type="SMR" id="Q04971"/>
<dbReference type="STRING" id="220341.gene:17588479"/>
<dbReference type="KEGG" id="stt:t4353"/>
<dbReference type="KEGG" id="sty:STY4662"/>
<dbReference type="PATRIC" id="fig|220341.7.peg.4761"/>
<dbReference type="eggNOG" id="ENOG50347GF">
    <property type="taxonomic scope" value="Bacteria"/>
</dbReference>
<dbReference type="HOGENOM" id="CLU_130852_0_0_6"/>
<dbReference type="OMA" id="TRMSDIN"/>
<dbReference type="OrthoDB" id="6592449at2"/>
<dbReference type="UniPathway" id="UPA00811"/>
<dbReference type="UniPathway" id="UPA00934"/>
<dbReference type="PHI-base" id="PHI:11217"/>
<dbReference type="Proteomes" id="UP000000541">
    <property type="component" value="Chromosome"/>
</dbReference>
<dbReference type="Proteomes" id="UP000002670">
    <property type="component" value="Chromosome"/>
</dbReference>
<dbReference type="GO" id="GO:0045227">
    <property type="term" value="P:capsule polysaccharide biosynthetic process"/>
    <property type="evidence" value="ECO:0007669"/>
    <property type="project" value="UniProtKB-UniPathway"/>
</dbReference>
<dbReference type="GO" id="GO:0006355">
    <property type="term" value="P:regulation of DNA-templated transcription"/>
    <property type="evidence" value="ECO:0007669"/>
    <property type="project" value="InterPro"/>
</dbReference>
<dbReference type="InterPro" id="IPR017032">
    <property type="entry name" value="TviA"/>
</dbReference>
<dbReference type="NCBIfam" id="NF011730">
    <property type="entry name" value="PRK15183.1"/>
    <property type="match status" value="1"/>
</dbReference>
<dbReference type="PIRSF" id="PIRSF034659">
    <property type="entry name" value="Vir_TviA"/>
    <property type="match status" value="1"/>
</dbReference>